<sequence length="629" mass="70289">MGYNAGSYDVIVIGAGHAGCEAGLAAARMGSKTLMLTINLDMVAFMPCNPSVGGPAKGIVVREIDALGGEMGRNIDKTHIQMRMLNTGKGPAVRALRAQADKFSYQHELKKTIEETPNLTLFQGMVERLIVEDGECKGVITQAGAEYTAKTVVITTGTFLRGEIIMGDLKYSSGPNNQQPSITLSEHLEELGFDLVRFKTGTPPRVNSNTIDYSKTEIQPGDDKPRAFSFETTKFIMDQIPCWLTYTSTETHRLIDENLHRSAMYSGMIKGTGPRYCPSIEDKVVRFNDKPRHQIFLEPEGRNTQEVYVQGLSTSLPEDVQRDMLRTIPGLENVEMMRTGYAIEYDAIVPTQLWPTLETKKIKNLYTAGQINGTSGYEEAAGQGLMAGINAACRSLGKKEVILGREDAYIGVLIDDLVTKGTNEPYRLLTSRAEYRLLLRHDNADLRLTEIGHEIGLIKEERYERFTNKKLQIEQEKERLSSIIIKPRPEVQELIRNIGGSELKDGIRASDLLRRPEMTYEHIHLLVPSEVELSDEVTEQVEIQIKYEGYIEKSLQQVERMKKMESKKIPVDIDYDAISSLASEARQKLKDVRPLSVGQASRISGVNPADISILLVYIEQGKIARVSNQ</sequence>
<organism>
    <name type="scientific">Bacillus cereus (strain ATCC 10987 / NRS 248)</name>
    <dbReference type="NCBI Taxonomy" id="222523"/>
    <lineage>
        <taxon>Bacteria</taxon>
        <taxon>Bacillati</taxon>
        <taxon>Bacillota</taxon>
        <taxon>Bacilli</taxon>
        <taxon>Bacillales</taxon>
        <taxon>Bacillaceae</taxon>
        <taxon>Bacillus</taxon>
        <taxon>Bacillus cereus group</taxon>
    </lineage>
</organism>
<feature type="chain" id="PRO_0000117049" description="tRNA uridine 5-carboxymethylaminomethyl modification enzyme MnmG">
    <location>
        <begin position="1"/>
        <end position="629"/>
    </location>
</feature>
<feature type="binding site" evidence="1">
    <location>
        <begin position="14"/>
        <end position="19"/>
    </location>
    <ligand>
        <name>FAD</name>
        <dbReference type="ChEBI" id="CHEBI:57692"/>
    </ligand>
</feature>
<feature type="binding site" evidence="1">
    <location>
        <position position="126"/>
    </location>
    <ligand>
        <name>FAD</name>
        <dbReference type="ChEBI" id="CHEBI:57692"/>
    </ligand>
</feature>
<feature type="binding site" evidence="1">
    <location>
        <position position="181"/>
    </location>
    <ligand>
        <name>FAD</name>
        <dbReference type="ChEBI" id="CHEBI:57692"/>
    </ligand>
</feature>
<feature type="binding site" evidence="1">
    <location>
        <begin position="273"/>
        <end position="287"/>
    </location>
    <ligand>
        <name>NAD(+)</name>
        <dbReference type="ChEBI" id="CHEBI:57540"/>
    </ligand>
</feature>
<feature type="binding site" evidence="1">
    <location>
        <position position="370"/>
    </location>
    <ligand>
        <name>FAD</name>
        <dbReference type="ChEBI" id="CHEBI:57692"/>
    </ligand>
</feature>
<keyword id="KW-0963">Cytoplasm</keyword>
<keyword id="KW-0274">FAD</keyword>
<keyword id="KW-0285">Flavoprotein</keyword>
<keyword id="KW-0520">NAD</keyword>
<keyword id="KW-0819">tRNA processing</keyword>
<name>MNMG_BACC1</name>
<accession>Q72WU4</accession>
<gene>
    <name evidence="1" type="primary">mnmG</name>
    <name evidence="1" type="synonym">gidA</name>
    <name type="ordered locus">BCE_5634</name>
</gene>
<evidence type="ECO:0000255" key="1">
    <source>
        <dbReference type="HAMAP-Rule" id="MF_00129"/>
    </source>
</evidence>
<comment type="function">
    <text evidence="1">NAD-binding protein involved in the addition of a carboxymethylaminomethyl (cmnm) group at the wobble position (U34) of certain tRNAs, forming tRNA-cmnm(5)s(2)U34.</text>
</comment>
<comment type="cofactor">
    <cofactor evidence="1">
        <name>FAD</name>
        <dbReference type="ChEBI" id="CHEBI:57692"/>
    </cofactor>
</comment>
<comment type="subunit">
    <text evidence="1">Homodimer. Heterotetramer of two MnmE and two MnmG subunits.</text>
</comment>
<comment type="subcellular location">
    <subcellularLocation>
        <location evidence="1">Cytoplasm</location>
    </subcellularLocation>
</comment>
<comment type="similarity">
    <text evidence="1">Belongs to the MnmG family.</text>
</comment>
<protein>
    <recommendedName>
        <fullName evidence="1">tRNA uridine 5-carboxymethylaminomethyl modification enzyme MnmG</fullName>
    </recommendedName>
    <alternativeName>
        <fullName evidence="1">Glucose-inhibited division protein A</fullName>
    </alternativeName>
</protein>
<proteinExistence type="inferred from homology"/>
<reference key="1">
    <citation type="journal article" date="2004" name="Nucleic Acids Res.">
        <title>The genome sequence of Bacillus cereus ATCC 10987 reveals metabolic adaptations and a large plasmid related to Bacillus anthracis pXO1.</title>
        <authorList>
            <person name="Rasko D.A."/>
            <person name="Ravel J."/>
            <person name="Oekstad O.A."/>
            <person name="Helgason E."/>
            <person name="Cer R.Z."/>
            <person name="Jiang L."/>
            <person name="Shores K.A."/>
            <person name="Fouts D.E."/>
            <person name="Tourasse N.J."/>
            <person name="Angiuoli S.V."/>
            <person name="Kolonay J.F."/>
            <person name="Nelson W.C."/>
            <person name="Kolstoe A.-B."/>
            <person name="Fraser C.M."/>
            <person name="Read T.D."/>
        </authorList>
    </citation>
    <scope>NUCLEOTIDE SEQUENCE [LARGE SCALE GENOMIC DNA]</scope>
    <source>
        <strain>ATCC 10987 / NRS 248</strain>
    </source>
</reference>
<dbReference type="EMBL" id="AE017194">
    <property type="protein sequence ID" value="AAS44534.1"/>
    <property type="molecule type" value="Genomic_DNA"/>
</dbReference>
<dbReference type="SMR" id="Q72WU4"/>
<dbReference type="KEGG" id="bca:BCE_5634"/>
<dbReference type="HOGENOM" id="CLU_007831_2_2_9"/>
<dbReference type="Proteomes" id="UP000002527">
    <property type="component" value="Chromosome"/>
</dbReference>
<dbReference type="GO" id="GO:0005829">
    <property type="term" value="C:cytosol"/>
    <property type="evidence" value="ECO:0007669"/>
    <property type="project" value="TreeGrafter"/>
</dbReference>
<dbReference type="GO" id="GO:0050660">
    <property type="term" value="F:flavin adenine dinucleotide binding"/>
    <property type="evidence" value="ECO:0007669"/>
    <property type="project" value="UniProtKB-UniRule"/>
</dbReference>
<dbReference type="GO" id="GO:0030488">
    <property type="term" value="P:tRNA methylation"/>
    <property type="evidence" value="ECO:0007669"/>
    <property type="project" value="TreeGrafter"/>
</dbReference>
<dbReference type="GO" id="GO:0002098">
    <property type="term" value="P:tRNA wobble uridine modification"/>
    <property type="evidence" value="ECO:0007669"/>
    <property type="project" value="InterPro"/>
</dbReference>
<dbReference type="FunFam" id="1.10.10.1800:FF:000001">
    <property type="entry name" value="tRNA uridine 5-carboxymethylaminomethyl modification enzyme MnmG"/>
    <property type="match status" value="1"/>
</dbReference>
<dbReference type="FunFam" id="1.10.150.570:FF:000001">
    <property type="entry name" value="tRNA uridine 5-carboxymethylaminomethyl modification enzyme MnmG"/>
    <property type="match status" value="1"/>
</dbReference>
<dbReference type="FunFam" id="3.50.50.60:FF:000002">
    <property type="entry name" value="tRNA uridine 5-carboxymethylaminomethyl modification enzyme MnmG"/>
    <property type="match status" value="1"/>
</dbReference>
<dbReference type="FunFam" id="3.50.50.60:FF:000063">
    <property type="entry name" value="tRNA uridine 5-carboxymethylaminomethyl modification enzyme MnmG"/>
    <property type="match status" value="1"/>
</dbReference>
<dbReference type="Gene3D" id="3.50.50.60">
    <property type="entry name" value="FAD/NAD(P)-binding domain"/>
    <property type="match status" value="2"/>
</dbReference>
<dbReference type="Gene3D" id="1.10.150.570">
    <property type="entry name" value="GidA associated domain, C-terminal subdomain"/>
    <property type="match status" value="1"/>
</dbReference>
<dbReference type="Gene3D" id="1.10.10.1800">
    <property type="entry name" value="tRNA uridine 5-carboxymethylaminomethyl modification enzyme MnmG/GidA"/>
    <property type="match status" value="1"/>
</dbReference>
<dbReference type="HAMAP" id="MF_00129">
    <property type="entry name" value="MnmG_GidA"/>
    <property type="match status" value="1"/>
</dbReference>
<dbReference type="InterPro" id="IPR036188">
    <property type="entry name" value="FAD/NAD-bd_sf"/>
</dbReference>
<dbReference type="InterPro" id="IPR049312">
    <property type="entry name" value="GIDA_C_N"/>
</dbReference>
<dbReference type="InterPro" id="IPR004416">
    <property type="entry name" value="MnmG"/>
</dbReference>
<dbReference type="InterPro" id="IPR002218">
    <property type="entry name" value="MnmG-rel"/>
</dbReference>
<dbReference type="InterPro" id="IPR020595">
    <property type="entry name" value="MnmG-rel_CS"/>
</dbReference>
<dbReference type="InterPro" id="IPR026904">
    <property type="entry name" value="MnmG_C"/>
</dbReference>
<dbReference type="InterPro" id="IPR047001">
    <property type="entry name" value="MnmG_C_subdom"/>
</dbReference>
<dbReference type="InterPro" id="IPR044920">
    <property type="entry name" value="MnmG_C_subdom_sf"/>
</dbReference>
<dbReference type="InterPro" id="IPR040131">
    <property type="entry name" value="MnmG_N"/>
</dbReference>
<dbReference type="NCBIfam" id="TIGR00136">
    <property type="entry name" value="mnmG_gidA"/>
    <property type="match status" value="1"/>
</dbReference>
<dbReference type="PANTHER" id="PTHR11806">
    <property type="entry name" value="GLUCOSE INHIBITED DIVISION PROTEIN A"/>
    <property type="match status" value="1"/>
</dbReference>
<dbReference type="PANTHER" id="PTHR11806:SF0">
    <property type="entry name" value="PROTEIN MTO1 HOMOLOG, MITOCHONDRIAL"/>
    <property type="match status" value="1"/>
</dbReference>
<dbReference type="Pfam" id="PF01134">
    <property type="entry name" value="GIDA"/>
    <property type="match status" value="1"/>
</dbReference>
<dbReference type="Pfam" id="PF21680">
    <property type="entry name" value="GIDA_C_1st"/>
    <property type="match status" value="1"/>
</dbReference>
<dbReference type="Pfam" id="PF13932">
    <property type="entry name" value="SAM_GIDA_C"/>
    <property type="match status" value="1"/>
</dbReference>
<dbReference type="PRINTS" id="PR00411">
    <property type="entry name" value="PNDRDTASEI"/>
</dbReference>
<dbReference type="SMART" id="SM01228">
    <property type="entry name" value="GIDA_assoc_3"/>
    <property type="match status" value="1"/>
</dbReference>
<dbReference type="SUPFAM" id="SSF51905">
    <property type="entry name" value="FAD/NAD(P)-binding domain"/>
    <property type="match status" value="1"/>
</dbReference>
<dbReference type="PROSITE" id="PS01280">
    <property type="entry name" value="GIDA_1"/>
    <property type="match status" value="1"/>
</dbReference>
<dbReference type="PROSITE" id="PS01281">
    <property type="entry name" value="GIDA_2"/>
    <property type="match status" value="1"/>
</dbReference>